<accession>Q6GFJ0</accession>
<keyword id="KW-0378">Hydrolase</keyword>
<keyword id="KW-0460">Magnesium</keyword>
<keyword id="KW-0479">Metal-binding</keyword>
<comment type="function">
    <text evidence="1">Has nucleoside phosphatase activity towards nucleoside triphosphates and nucleoside diphosphates.</text>
</comment>
<comment type="catalytic activity">
    <reaction evidence="1">
        <text>a ribonucleoside 5'-triphosphate + H2O = a ribonucleoside 5'-diphosphate + phosphate + H(+)</text>
        <dbReference type="Rhea" id="RHEA:23680"/>
        <dbReference type="ChEBI" id="CHEBI:15377"/>
        <dbReference type="ChEBI" id="CHEBI:15378"/>
        <dbReference type="ChEBI" id="CHEBI:43474"/>
        <dbReference type="ChEBI" id="CHEBI:57930"/>
        <dbReference type="ChEBI" id="CHEBI:61557"/>
        <dbReference type="EC" id="3.6.1.15"/>
    </reaction>
</comment>
<comment type="catalytic activity">
    <reaction evidence="1">
        <text>a ribonucleoside 5'-diphosphate + H2O = a ribonucleoside 5'-phosphate + phosphate + H(+)</text>
        <dbReference type="Rhea" id="RHEA:36799"/>
        <dbReference type="ChEBI" id="CHEBI:15377"/>
        <dbReference type="ChEBI" id="CHEBI:15378"/>
        <dbReference type="ChEBI" id="CHEBI:43474"/>
        <dbReference type="ChEBI" id="CHEBI:57930"/>
        <dbReference type="ChEBI" id="CHEBI:58043"/>
        <dbReference type="EC" id="3.6.1.6"/>
    </reaction>
</comment>
<comment type="cofactor">
    <cofactor evidence="1">
        <name>Mg(2+)</name>
        <dbReference type="ChEBI" id="CHEBI:18420"/>
    </cofactor>
</comment>
<comment type="similarity">
    <text evidence="1">Belongs to the Ntdp family.</text>
</comment>
<gene>
    <name type="ordered locus">SAR1957</name>
</gene>
<organism>
    <name type="scientific">Staphylococcus aureus (strain MRSA252)</name>
    <dbReference type="NCBI Taxonomy" id="282458"/>
    <lineage>
        <taxon>Bacteria</taxon>
        <taxon>Bacillati</taxon>
        <taxon>Bacillota</taxon>
        <taxon>Bacilli</taxon>
        <taxon>Bacillales</taxon>
        <taxon>Staphylococcaceae</taxon>
        <taxon>Staphylococcus</taxon>
    </lineage>
</organism>
<feature type="chain" id="PRO_0000248110" description="Nucleoside triphosphate/diphosphate phosphatase">
    <location>
        <begin position="1"/>
        <end position="180"/>
    </location>
</feature>
<feature type="active site" description="Proton donor" evidence="1">
    <location>
        <position position="26"/>
    </location>
</feature>
<feature type="binding site" evidence="1">
    <location>
        <position position="90"/>
    </location>
    <ligand>
        <name>Mg(2+)</name>
        <dbReference type="ChEBI" id="CHEBI:18420"/>
        <label>1</label>
    </ligand>
</feature>
<feature type="binding site" evidence="1">
    <location>
        <position position="106"/>
    </location>
    <ligand>
        <name>Mg(2+)</name>
        <dbReference type="ChEBI" id="CHEBI:18420"/>
        <label>1</label>
    </ligand>
</feature>
<feature type="binding site" evidence="1">
    <location>
        <position position="108"/>
    </location>
    <ligand>
        <name>Mg(2+)</name>
        <dbReference type="ChEBI" id="CHEBI:18420"/>
        <label>2</label>
    </ligand>
</feature>
<feature type="binding site" evidence="1">
    <location>
        <position position="110"/>
    </location>
    <ligand>
        <name>Mg(2+)</name>
        <dbReference type="ChEBI" id="CHEBI:18420"/>
        <label>1</label>
    </ligand>
</feature>
<feature type="binding site" evidence="1">
    <location>
        <position position="110"/>
    </location>
    <ligand>
        <name>Mg(2+)</name>
        <dbReference type="ChEBI" id="CHEBI:18420"/>
        <label>2</label>
    </ligand>
</feature>
<feature type="binding site" evidence="1">
    <location>
        <position position="123"/>
    </location>
    <ligand>
        <name>Mg(2+)</name>
        <dbReference type="ChEBI" id="CHEBI:18420"/>
        <label>2</label>
    </ligand>
</feature>
<feature type="binding site" evidence="1">
    <location>
        <position position="126"/>
    </location>
    <ligand>
        <name>Mg(2+)</name>
        <dbReference type="ChEBI" id="CHEBI:18420"/>
        <label>2</label>
    </ligand>
</feature>
<reference key="1">
    <citation type="journal article" date="2004" name="Proc. Natl. Acad. Sci. U.S.A.">
        <title>Complete genomes of two clinical Staphylococcus aureus strains: evidence for the rapid evolution of virulence and drug resistance.</title>
        <authorList>
            <person name="Holden M.T.G."/>
            <person name="Feil E.J."/>
            <person name="Lindsay J.A."/>
            <person name="Peacock S.J."/>
            <person name="Day N.P.J."/>
            <person name="Enright M.C."/>
            <person name="Foster T.J."/>
            <person name="Moore C.E."/>
            <person name="Hurst L."/>
            <person name="Atkin R."/>
            <person name="Barron A."/>
            <person name="Bason N."/>
            <person name="Bentley S.D."/>
            <person name="Chillingworth C."/>
            <person name="Chillingworth T."/>
            <person name="Churcher C."/>
            <person name="Clark L."/>
            <person name="Corton C."/>
            <person name="Cronin A."/>
            <person name="Doggett J."/>
            <person name="Dowd L."/>
            <person name="Feltwell T."/>
            <person name="Hance Z."/>
            <person name="Harris B."/>
            <person name="Hauser H."/>
            <person name="Holroyd S."/>
            <person name="Jagels K."/>
            <person name="James K.D."/>
            <person name="Lennard N."/>
            <person name="Line A."/>
            <person name="Mayes R."/>
            <person name="Moule S."/>
            <person name="Mungall K."/>
            <person name="Ormond D."/>
            <person name="Quail M.A."/>
            <person name="Rabbinowitsch E."/>
            <person name="Rutherford K.M."/>
            <person name="Sanders M."/>
            <person name="Sharp S."/>
            <person name="Simmonds M."/>
            <person name="Stevens K."/>
            <person name="Whitehead S."/>
            <person name="Barrell B.G."/>
            <person name="Spratt B.G."/>
            <person name="Parkhill J."/>
        </authorList>
    </citation>
    <scope>NUCLEOTIDE SEQUENCE [LARGE SCALE GENOMIC DNA]</scope>
    <source>
        <strain>MRSA252</strain>
    </source>
</reference>
<dbReference type="EC" id="3.6.1.15" evidence="1"/>
<dbReference type="EC" id="3.6.1.6" evidence="1"/>
<dbReference type="EMBL" id="BX571856">
    <property type="protein sequence ID" value="CAG40944.1"/>
    <property type="molecule type" value="Genomic_DNA"/>
</dbReference>
<dbReference type="RefSeq" id="WP_000251252.1">
    <property type="nucleotide sequence ID" value="NC_002952.2"/>
</dbReference>
<dbReference type="SMR" id="Q6GFJ0"/>
<dbReference type="KEGG" id="sar:SAR1957"/>
<dbReference type="HOGENOM" id="CLU_109787_1_0_9"/>
<dbReference type="Proteomes" id="UP000000596">
    <property type="component" value="Chromosome"/>
</dbReference>
<dbReference type="GO" id="GO:0000287">
    <property type="term" value="F:magnesium ion binding"/>
    <property type="evidence" value="ECO:0007669"/>
    <property type="project" value="UniProtKB-UniRule"/>
</dbReference>
<dbReference type="GO" id="GO:0017110">
    <property type="term" value="F:nucleoside diphosphate phosphatase activity"/>
    <property type="evidence" value="ECO:0007669"/>
    <property type="project" value="UniProtKB-UniRule"/>
</dbReference>
<dbReference type="GO" id="GO:0017111">
    <property type="term" value="F:ribonucleoside triphosphate phosphatase activity"/>
    <property type="evidence" value="ECO:0007669"/>
    <property type="project" value="UniProtKB-UniRule"/>
</dbReference>
<dbReference type="Gene3D" id="2.40.380.10">
    <property type="entry name" value="FomD-like"/>
    <property type="match status" value="1"/>
</dbReference>
<dbReference type="HAMAP" id="MF_01568">
    <property type="entry name" value="Ntdp"/>
    <property type="match status" value="1"/>
</dbReference>
<dbReference type="InterPro" id="IPR007295">
    <property type="entry name" value="DUF402"/>
</dbReference>
<dbReference type="InterPro" id="IPR035930">
    <property type="entry name" value="FomD-like_sf"/>
</dbReference>
<dbReference type="InterPro" id="IPR050212">
    <property type="entry name" value="Ntdp-like"/>
</dbReference>
<dbReference type="InterPro" id="IPR016882">
    <property type="entry name" value="SA1684"/>
</dbReference>
<dbReference type="NCBIfam" id="NF010183">
    <property type="entry name" value="PRK13662.1"/>
    <property type="match status" value="1"/>
</dbReference>
<dbReference type="PANTHER" id="PTHR39159">
    <property type="match status" value="1"/>
</dbReference>
<dbReference type="PANTHER" id="PTHR39159:SF1">
    <property type="entry name" value="UPF0374 PROTEIN YGAC"/>
    <property type="match status" value="1"/>
</dbReference>
<dbReference type="Pfam" id="PF04167">
    <property type="entry name" value="DUF402"/>
    <property type="match status" value="1"/>
</dbReference>
<dbReference type="PIRSF" id="PIRSF028345">
    <property type="entry name" value="UCP028345"/>
    <property type="match status" value="1"/>
</dbReference>
<dbReference type="SUPFAM" id="SSF159234">
    <property type="entry name" value="FomD-like"/>
    <property type="match status" value="1"/>
</dbReference>
<proteinExistence type="inferred from homology"/>
<evidence type="ECO:0000255" key="1">
    <source>
        <dbReference type="HAMAP-Rule" id="MF_01568"/>
    </source>
</evidence>
<sequence length="180" mass="21690">MVRESIPKEGENIKIQSYKHDGKIHRVWSETTILKGTDHVVIGGNDHTLVTESDGRTWITREPAIVYFHSEYWFNVICMFREDGIYYYCNLSSPFVCDEEALKYIDYDLDIKVYPNGKYHLLDEDEYEQHMNQMNYPHDIDIILRRNVDILQQWIEQKKGPFAPDFIKVWKDRYKKIRQY</sequence>
<protein>
    <recommendedName>
        <fullName evidence="1">Nucleoside triphosphate/diphosphate phosphatase</fullName>
        <ecNumber evidence="1">3.6.1.15</ecNumber>
        <ecNumber evidence="1">3.6.1.6</ecNumber>
    </recommendedName>
</protein>
<name>NTDP_STAAR</name>